<reference key="1">
    <citation type="journal article" date="2009" name="J. Bacteriol.">
        <title>Genome sequences of three Agrobacterium biovars help elucidate the evolution of multichromosome genomes in bacteria.</title>
        <authorList>
            <person name="Slater S.C."/>
            <person name="Goldman B.S."/>
            <person name="Goodner B."/>
            <person name="Setubal J.C."/>
            <person name="Farrand S.K."/>
            <person name="Nester E.W."/>
            <person name="Burr T.J."/>
            <person name="Banta L."/>
            <person name="Dickerman A.W."/>
            <person name="Paulsen I."/>
            <person name="Otten L."/>
            <person name="Suen G."/>
            <person name="Welch R."/>
            <person name="Almeida N.F."/>
            <person name="Arnold F."/>
            <person name="Burton O.T."/>
            <person name="Du Z."/>
            <person name="Ewing A."/>
            <person name="Godsy E."/>
            <person name="Heisel S."/>
            <person name="Houmiel K.L."/>
            <person name="Jhaveri J."/>
            <person name="Lu J."/>
            <person name="Miller N.M."/>
            <person name="Norton S."/>
            <person name="Chen Q."/>
            <person name="Phoolcharoen W."/>
            <person name="Ohlin V."/>
            <person name="Ondrusek D."/>
            <person name="Pride N."/>
            <person name="Stricklin S.L."/>
            <person name="Sun J."/>
            <person name="Wheeler C."/>
            <person name="Wilson L."/>
            <person name="Zhu H."/>
            <person name="Wood D.W."/>
        </authorList>
    </citation>
    <scope>NUCLEOTIDE SEQUENCE [LARGE SCALE GENOMIC DNA]</scope>
    <source>
        <strain>K84 / ATCC BAA-868</strain>
    </source>
</reference>
<keyword id="KW-0067">ATP-binding</keyword>
<keyword id="KW-0997">Cell inner membrane</keyword>
<keyword id="KW-1003">Cell membrane</keyword>
<keyword id="KW-0963">Cytoplasm</keyword>
<keyword id="KW-0472">Membrane</keyword>
<keyword id="KW-0479">Metal-binding</keyword>
<keyword id="KW-0547">Nucleotide-binding</keyword>
<keyword id="KW-0653">Protein transport</keyword>
<keyword id="KW-1278">Translocase</keyword>
<keyword id="KW-0811">Translocation</keyword>
<keyword id="KW-0813">Transport</keyword>
<keyword id="KW-0862">Zinc</keyword>
<name>SECA_RHIR8</name>
<accession>B9JB90</accession>
<dbReference type="EC" id="7.4.2.8" evidence="1"/>
<dbReference type="EMBL" id="CP000628">
    <property type="protein sequence ID" value="ACM27922.1"/>
    <property type="molecule type" value="Genomic_DNA"/>
</dbReference>
<dbReference type="RefSeq" id="WP_012652544.1">
    <property type="nucleotide sequence ID" value="NC_011985.1"/>
</dbReference>
<dbReference type="SMR" id="B9JB90"/>
<dbReference type="STRING" id="311403.Arad_4157"/>
<dbReference type="KEGG" id="ara:Arad_4157"/>
<dbReference type="eggNOG" id="COG0653">
    <property type="taxonomic scope" value="Bacteria"/>
</dbReference>
<dbReference type="HOGENOM" id="CLU_005314_3_0_5"/>
<dbReference type="Proteomes" id="UP000001600">
    <property type="component" value="Chromosome 1"/>
</dbReference>
<dbReference type="GO" id="GO:0031522">
    <property type="term" value="C:cell envelope Sec protein transport complex"/>
    <property type="evidence" value="ECO:0007669"/>
    <property type="project" value="TreeGrafter"/>
</dbReference>
<dbReference type="GO" id="GO:0005829">
    <property type="term" value="C:cytosol"/>
    <property type="evidence" value="ECO:0007669"/>
    <property type="project" value="TreeGrafter"/>
</dbReference>
<dbReference type="GO" id="GO:0005886">
    <property type="term" value="C:plasma membrane"/>
    <property type="evidence" value="ECO:0007669"/>
    <property type="project" value="UniProtKB-SubCell"/>
</dbReference>
<dbReference type="GO" id="GO:0005524">
    <property type="term" value="F:ATP binding"/>
    <property type="evidence" value="ECO:0007669"/>
    <property type="project" value="UniProtKB-UniRule"/>
</dbReference>
<dbReference type="GO" id="GO:0046872">
    <property type="term" value="F:metal ion binding"/>
    <property type="evidence" value="ECO:0007669"/>
    <property type="project" value="UniProtKB-KW"/>
</dbReference>
<dbReference type="GO" id="GO:0008564">
    <property type="term" value="F:protein-exporting ATPase activity"/>
    <property type="evidence" value="ECO:0007669"/>
    <property type="project" value="UniProtKB-EC"/>
</dbReference>
<dbReference type="GO" id="GO:0065002">
    <property type="term" value="P:intracellular protein transmembrane transport"/>
    <property type="evidence" value="ECO:0007669"/>
    <property type="project" value="UniProtKB-UniRule"/>
</dbReference>
<dbReference type="GO" id="GO:0017038">
    <property type="term" value="P:protein import"/>
    <property type="evidence" value="ECO:0007669"/>
    <property type="project" value="InterPro"/>
</dbReference>
<dbReference type="GO" id="GO:0006605">
    <property type="term" value="P:protein targeting"/>
    <property type="evidence" value="ECO:0007669"/>
    <property type="project" value="UniProtKB-UniRule"/>
</dbReference>
<dbReference type="GO" id="GO:0043952">
    <property type="term" value="P:protein transport by the Sec complex"/>
    <property type="evidence" value="ECO:0007669"/>
    <property type="project" value="TreeGrafter"/>
</dbReference>
<dbReference type="CDD" id="cd17928">
    <property type="entry name" value="DEXDc_SecA"/>
    <property type="match status" value="1"/>
</dbReference>
<dbReference type="CDD" id="cd18803">
    <property type="entry name" value="SF2_C_secA"/>
    <property type="match status" value="1"/>
</dbReference>
<dbReference type="FunFam" id="3.90.1440.10:FF:000001">
    <property type="entry name" value="Preprotein translocase subunit SecA"/>
    <property type="match status" value="1"/>
</dbReference>
<dbReference type="FunFam" id="1.10.3060.10:FF:000003">
    <property type="entry name" value="Protein translocase subunit SecA"/>
    <property type="match status" value="1"/>
</dbReference>
<dbReference type="FunFam" id="3.40.50.300:FF:000334">
    <property type="entry name" value="Protein translocase subunit SecA"/>
    <property type="match status" value="1"/>
</dbReference>
<dbReference type="FunFam" id="3.40.50.300:FF:001790">
    <property type="entry name" value="Protein translocase subunit SecA"/>
    <property type="match status" value="1"/>
</dbReference>
<dbReference type="Gene3D" id="1.10.3060.10">
    <property type="entry name" value="Helical scaffold and wing domains of SecA"/>
    <property type="match status" value="1"/>
</dbReference>
<dbReference type="Gene3D" id="3.40.50.300">
    <property type="entry name" value="P-loop containing nucleotide triphosphate hydrolases"/>
    <property type="match status" value="2"/>
</dbReference>
<dbReference type="Gene3D" id="3.90.1440.10">
    <property type="entry name" value="SecA, preprotein cross-linking domain"/>
    <property type="match status" value="1"/>
</dbReference>
<dbReference type="HAMAP" id="MF_01382">
    <property type="entry name" value="SecA"/>
    <property type="match status" value="1"/>
</dbReference>
<dbReference type="InterPro" id="IPR014001">
    <property type="entry name" value="Helicase_ATP-bd"/>
</dbReference>
<dbReference type="InterPro" id="IPR027417">
    <property type="entry name" value="P-loop_NTPase"/>
</dbReference>
<dbReference type="InterPro" id="IPR001763">
    <property type="entry name" value="Rhodanese-like_dom"/>
</dbReference>
<dbReference type="InterPro" id="IPR004027">
    <property type="entry name" value="SEC_C_motif"/>
</dbReference>
<dbReference type="InterPro" id="IPR000185">
    <property type="entry name" value="SecA"/>
</dbReference>
<dbReference type="InterPro" id="IPR020937">
    <property type="entry name" value="SecA_CS"/>
</dbReference>
<dbReference type="InterPro" id="IPR011115">
    <property type="entry name" value="SecA_DEAD"/>
</dbReference>
<dbReference type="InterPro" id="IPR014018">
    <property type="entry name" value="SecA_motor_DEAD"/>
</dbReference>
<dbReference type="InterPro" id="IPR011130">
    <property type="entry name" value="SecA_preprotein_X-link_dom"/>
</dbReference>
<dbReference type="InterPro" id="IPR044722">
    <property type="entry name" value="SecA_SF2_C"/>
</dbReference>
<dbReference type="InterPro" id="IPR011116">
    <property type="entry name" value="SecA_Wing/Scaffold"/>
</dbReference>
<dbReference type="InterPro" id="IPR036266">
    <property type="entry name" value="SecA_Wing/Scaffold_sf"/>
</dbReference>
<dbReference type="InterPro" id="IPR036670">
    <property type="entry name" value="SecA_X-link_sf"/>
</dbReference>
<dbReference type="NCBIfam" id="NF009538">
    <property type="entry name" value="PRK12904.1"/>
    <property type="match status" value="1"/>
</dbReference>
<dbReference type="NCBIfam" id="TIGR00963">
    <property type="entry name" value="secA"/>
    <property type="match status" value="1"/>
</dbReference>
<dbReference type="PANTHER" id="PTHR30612:SF0">
    <property type="entry name" value="CHLOROPLAST PROTEIN-TRANSPORTING ATPASE"/>
    <property type="match status" value="1"/>
</dbReference>
<dbReference type="PANTHER" id="PTHR30612">
    <property type="entry name" value="SECA INNER MEMBRANE COMPONENT OF SEC PROTEIN SECRETION SYSTEM"/>
    <property type="match status" value="1"/>
</dbReference>
<dbReference type="Pfam" id="PF21090">
    <property type="entry name" value="P-loop_SecA"/>
    <property type="match status" value="1"/>
</dbReference>
<dbReference type="Pfam" id="PF02810">
    <property type="entry name" value="SEC-C"/>
    <property type="match status" value="1"/>
</dbReference>
<dbReference type="Pfam" id="PF07517">
    <property type="entry name" value="SecA_DEAD"/>
    <property type="match status" value="1"/>
</dbReference>
<dbReference type="Pfam" id="PF01043">
    <property type="entry name" value="SecA_PP_bind"/>
    <property type="match status" value="1"/>
</dbReference>
<dbReference type="Pfam" id="PF07516">
    <property type="entry name" value="SecA_SW"/>
    <property type="match status" value="1"/>
</dbReference>
<dbReference type="PRINTS" id="PR00906">
    <property type="entry name" value="SECA"/>
</dbReference>
<dbReference type="SMART" id="SM00957">
    <property type="entry name" value="SecA_DEAD"/>
    <property type="match status" value="1"/>
</dbReference>
<dbReference type="SMART" id="SM00958">
    <property type="entry name" value="SecA_PP_bind"/>
    <property type="match status" value="1"/>
</dbReference>
<dbReference type="SUPFAM" id="SSF81886">
    <property type="entry name" value="Helical scaffold and wing domains of SecA"/>
    <property type="match status" value="1"/>
</dbReference>
<dbReference type="SUPFAM" id="SSF52540">
    <property type="entry name" value="P-loop containing nucleoside triphosphate hydrolases"/>
    <property type="match status" value="2"/>
</dbReference>
<dbReference type="SUPFAM" id="SSF81767">
    <property type="entry name" value="Pre-protein crosslinking domain of SecA"/>
    <property type="match status" value="1"/>
</dbReference>
<dbReference type="PROSITE" id="PS01312">
    <property type="entry name" value="SECA"/>
    <property type="match status" value="1"/>
</dbReference>
<dbReference type="PROSITE" id="PS51196">
    <property type="entry name" value="SECA_MOTOR_DEAD"/>
    <property type="match status" value="1"/>
</dbReference>
<feature type="chain" id="PRO_1000184211" description="Protein translocase subunit SecA">
    <location>
        <begin position="1"/>
        <end position="906"/>
    </location>
</feature>
<feature type="binding site" evidence="1">
    <location>
        <position position="89"/>
    </location>
    <ligand>
        <name>ATP</name>
        <dbReference type="ChEBI" id="CHEBI:30616"/>
    </ligand>
</feature>
<feature type="binding site" evidence="1">
    <location>
        <begin position="107"/>
        <end position="111"/>
    </location>
    <ligand>
        <name>ATP</name>
        <dbReference type="ChEBI" id="CHEBI:30616"/>
    </ligand>
</feature>
<feature type="binding site" evidence="1">
    <location>
        <position position="502"/>
    </location>
    <ligand>
        <name>ATP</name>
        <dbReference type="ChEBI" id="CHEBI:30616"/>
    </ligand>
</feature>
<feature type="binding site" evidence="1">
    <location>
        <position position="885"/>
    </location>
    <ligand>
        <name>Zn(2+)</name>
        <dbReference type="ChEBI" id="CHEBI:29105"/>
    </ligand>
</feature>
<feature type="binding site" evidence="1">
    <location>
        <position position="887"/>
    </location>
    <ligand>
        <name>Zn(2+)</name>
        <dbReference type="ChEBI" id="CHEBI:29105"/>
    </ligand>
</feature>
<feature type="binding site" evidence="1">
    <location>
        <position position="896"/>
    </location>
    <ligand>
        <name>Zn(2+)</name>
        <dbReference type="ChEBI" id="CHEBI:29105"/>
    </ligand>
</feature>
<feature type="binding site" evidence="1">
    <location>
        <position position="897"/>
    </location>
    <ligand>
        <name>Zn(2+)</name>
        <dbReference type="ChEBI" id="CHEBI:29105"/>
    </ligand>
</feature>
<organism>
    <name type="scientific">Rhizobium rhizogenes (strain K84 / ATCC BAA-868)</name>
    <name type="common">Agrobacterium radiobacter</name>
    <dbReference type="NCBI Taxonomy" id="311403"/>
    <lineage>
        <taxon>Bacteria</taxon>
        <taxon>Pseudomonadati</taxon>
        <taxon>Pseudomonadota</taxon>
        <taxon>Alphaproteobacteria</taxon>
        <taxon>Hyphomicrobiales</taxon>
        <taxon>Rhizobiaceae</taxon>
        <taxon>Rhizobium/Agrobacterium group</taxon>
        <taxon>Rhizobium</taxon>
    </lineage>
</organism>
<gene>
    <name evidence="1" type="primary">secA</name>
    <name type="ordered locus">Arad_4157</name>
</gene>
<evidence type="ECO:0000255" key="1">
    <source>
        <dbReference type="HAMAP-Rule" id="MF_01382"/>
    </source>
</evidence>
<comment type="function">
    <text evidence="1">Part of the Sec protein translocase complex. Interacts with the SecYEG preprotein conducting channel. Has a central role in coupling the hydrolysis of ATP to the transfer of proteins into and across the cell membrane, serving both as a receptor for the preprotein-SecB complex and as an ATP-driven molecular motor driving the stepwise translocation of polypeptide chains across the membrane.</text>
</comment>
<comment type="catalytic activity">
    <reaction evidence="1">
        <text>ATP + H2O + cellular proteinSide 1 = ADP + phosphate + cellular proteinSide 2.</text>
        <dbReference type="EC" id="7.4.2.8"/>
    </reaction>
</comment>
<comment type="cofactor">
    <cofactor evidence="1">
        <name>Zn(2+)</name>
        <dbReference type="ChEBI" id="CHEBI:29105"/>
    </cofactor>
    <text evidence="1">May bind 1 zinc ion per subunit.</text>
</comment>
<comment type="subunit">
    <text evidence="1">Monomer and homodimer. Part of the essential Sec protein translocation apparatus which comprises SecA, SecYEG and auxiliary proteins SecDF-YajC and YidC.</text>
</comment>
<comment type="subcellular location">
    <subcellularLocation>
        <location evidence="1">Cell inner membrane</location>
        <topology evidence="1">Peripheral membrane protein</topology>
        <orientation evidence="1">Cytoplasmic side</orientation>
    </subcellularLocation>
    <subcellularLocation>
        <location evidence="1">Cytoplasm</location>
    </subcellularLocation>
    <text evidence="1">Distribution is 50-50.</text>
</comment>
<comment type="similarity">
    <text evidence="1">Belongs to the SecA family.</text>
</comment>
<sequence length="906" mass="102021">MVSLGGIARKLFGSSNDRRVKSYQPNVVAINALEEQMRALSDEALAAKTVEFRQQLADGKTLDDILVPAFAVAREASRRVLGMRPFDVQLIGGMILHSNAIAEMKTGEGKTLVGTLPVYLNALAGKGVHVVTVNDYLAQRDSATMGRLYGFLGMRTGVIVHGLSDDERRDAYACDITYATNNELGFDYLRDNMKYDRGQMVQRGHNFAIVDEVDSILVDEARTPLIISGPLDDRSDLYITIDAFIPGLTKDDYEIDEKQRSANFSEDGTEKLETMLREAGLLKGESLYDVENVAIVHHINNALKAHKLFQRDKDYIVRNDEVVIIDEFTGRMMPGRRYSDGQHQALEAKERVQIQPENQTLAQITFQNYFRMYDKLAGMTGTASTEAEEFGNIYGLDVIEVPTNLPIQRIDEDDEVYRTHEEKFKAIIAEILEAHKRDQPVLVGTTSIEKSELLAELMRKQGFTNFQVLNARYHEQEAYIVAQAGVPGAVTIATNMAGRGTDIQLGGNLEMRVERDLHEVEPGPERDAAIARIAEEIQVLKQRSIAAGGLYVIASERHESRRIDNQLRGRSGRQGDPGRSKFYLSLQDDLMRIFGSDRMDGMLQKLGLKEGEAIVHPWINKALERAQKKVEARNFDIRKNVLKYDDVLNDQRKVIFEQRVELMDATDLTETVGDMRHDVIEDLVSKHIPERAYAEQWDADGLKTAVANFFDLDLPIHDWVKEEGIAEDDIRARLTEVAEKAAAEKAERFGPEIMTYVERSIVLQTLDNLWREHIVNLDHLRSVIGFRGYAQRDPLQEYKAEAFELFQALLNNLRQAVTAQLSRVELVQQPAEPQPPAMHGSHIDATTGQDEFAPLAMINETVVSPENRDPQNPTTWGRIGRNEACPCGSGKKYKHCHGAFENNEVV</sequence>
<proteinExistence type="inferred from homology"/>
<protein>
    <recommendedName>
        <fullName evidence="1">Protein translocase subunit SecA</fullName>
        <ecNumber evidence="1">7.4.2.8</ecNumber>
    </recommendedName>
</protein>